<proteinExistence type="evidence at protein level"/>
<dbReference type="EMBL" id="BC083714">
    <property type="protein sequence ID" value="AAH83714.1"/>
    <property type="molecule type" value="mRNA"/>
</dbReference>
<dbReference type="RefSeq" id="NP_001011969.1">
    <property type="nucleotide sequence ID" value="NM_001011969.1"/>
</dbReference>
<dbReference type="SMR" id="Q5XIG8"/>
<dbReference type="BioGRID" id="255640">
    <property type="interactions" value="1"/>
</dbReference>
<dbReference type="FunCoup" id="Q5XIG8">
    <property type="interactions" value="3070"/>
</dbReference>
<dbReference type="IntAct" id="Q5XIG8">
    <property type="interactions" value="3"/>
</dbReference>
<dbReference type="STRING" id="10116.ENSRNOP00000009923"/>
<dbReference type="iPTMnet" id="Q5XIG8"/>
<dbReference type="PhosphoSitePlus" id="Q5XIG8"/>
<dbReference type="jPOST" id="Q5XIG8"/>
<dbReference type="PaxDb" id="10116-ENSRNOP00000009923"/>
<dbReference type="Ensembl" id="ENSRNOT00000009923.7">
    <property type="protein sequence ID" value="ENSRNOP00000009923.4"/>
    <property type="gene ID" value="ENSRNOG00000007134.7"/>
</dbReference>
<dbReference type="GeneID" id="297699"/>
<dbReference type="KEGG" id="rno:297699"/>
<dbReference type="UCSC" id="RGD:1311114">
    <property type="organism name" value="rat"/>
</dbReference>
<dbReference type="AGR" id="RGD:1311114"/>
<dbReference type="CTD" id="11171"/>
<dbReference type="RGD" id="1311114">
    <property type="gene designation" value="Strap"/>
</dbReference>
<dbReference type="eggNOG" id="KOG0278">
    <property type="taxonomic scope" value="Eukaryota"/>
</dbReference>
<dbReference type="GeneTree" id="ENSGT00940000155197"/>
<dbReference type="HOGENOM" id="CLU_000288_57_6_1"/>
<dbReference type="InParanoid" id="Q5XIG8"/>
<dbReference type="OMA" id="DGFYGLW"/>
<dbReference type="OrthoDB" id="200206at2759"/>
<dbReference type="PhylomeDB" id="Q5XIG8"/>
<dbReference type="TreeFam" id="TF323287"/>
<dbReference type="Reactome" id="R-RNO-2173788">
    <property type="pathway name" value="Downregulation of TGF-beta receptor signaling"/>
</dbReference>
<dbReference type="PRO" id="PR:Q5XIG8"/>
<dbReference type="Proteomes" id="UP000002494">
    <property type="component" value="Chromosome 4"/>
</dbReference>
<dbReference type="Bgee" id="ENSRNOG00000007134">
    <property type="expression patterns" value="Expressed in quadriceps femoris and 20 other cell types or tissues"/>
</dbReference>
<dbReference type="GO" id="GO:0005737">
    <property type="term" value="C:cytoplasm"/>
    <property type="evidence" value="ECO:0000266"/>
    <property type="project" value="RGD"/>
</dbReference>
<dbReference type="GO" id="GO:0005829">
    <property type="term" value="C:cytosol"/>
    <property type="evidence" value="ECO:0000250"/>
    <property type="project" value="UniProtKB"/>
</dbReference>
<dbReference type="GO" id="GO:0005634">
    <property type="term" value="C:nucleus"/>
    <property type="evidence" value="ECO:0000266"/>
    <property type="project" value="RGD"/>
</dbReference>
<dbReference type="GO" id="GO:0032797">
    <property type="term" value="C:SMN complex"/>
    <property type="evidence" value="ECO:0000250"/>
    <property type="project" value="UniProtKB"/>
</dbReference>
<dbReference type="GO" id="GO:0034719">
    <property type="term" value="C:SMN-Sm protein complex"/>
    <property type="evidence" value="ECO:0000250"/>
    <property type="project" value="UniProtKB"/>
</dbReference>
<dbReference type="GO" id="GO:0003729">
    <property type="term" value="F:mRNA binding"/>
    <property type="evidence" value="ECO:0000266"/>
    <property type="project" value="RGD"/>
</dbReference>
<dbReference type="GO" id="GO:0003723">
    <property type="term" value="F:RNA binding"/>
    <property type="evidence" value="ECO:0000318"/>
    <property type="project" value="GO_Central"/>
</dbReference>
<dbReference type="GO" id="GO:0005102">
    <property type="term" value="F:signaling receptor binding"/>
    <property type="evidence" value="ECO:0000266"/>
    <property type="project" value="RGD"/>
</dbReference>
<dbReference type="GO" id="GO:1990447">
    <property type="term" value="F:U2 snRNP binding"/>
    <property type="evidence" value="ECO:0000266"/>
    <property type="project" value="RGD"/>
</dbReference>
<dbReference type="GO" id="GO:0000380">
    <property type="term" value="P:alternative mRNA splicing, via spliceosome"/>
    <property type="evidence" value="ECO:0000266"/>
    <property type="project" value="RGD"/>
</dbReference>
<dbReference type="GO" id="GO:0030277">
    <property type="term" value="P:maintenance of gastrointestinal epithelium"/>
    <property type="evidence" value="ECO:0000266"/>
    <property type="project" value="RGD"/>
</dbReference>
<dbReference type="GO" id="GO:0000122">
    <property type="term" value="P:negative regulation of transcription by RNA polymerase II"/>
    <property type="evidence" value="ECO:0000266"/>
    <property type="project" value="RGD"/>
</dbReference>
<dbReference type="GO" id="GO:0030512">
    <property type="term" value="P:negative regulation of transforming growth factor beta receptor signaling pathway"/>
    <property type="evidence" value="ECO:0000266"/>
    <property type="project" value="RGD"/>
</dbReference>
<dbReference type="GO" id="GO:0030182">
    <property type="term" value="P:neuron differentiation"/>
    <property type="evidence" value="ECO:0000266"/>
    <property type="project" value="RGD"/>
</dbReference>
<dbReference type="GO" id="GO:0022618">
    <property type="term" value="P:protein-RNA complex assembly"/>
    <property type="evidence" value="ECO:0000266"/>
    <property type="project" value="RGD"/>
</dbReference>
<dbReference type="GO" id="GO:0000387">
    <property type="term" value="P:spliceosomal snRNP assembly"/>
    <property type="evidence" value="ECO:0000250"/>
    <property type="project" value="UniProtKB"/>
</dbReference>
<dbReference type="CDD" id="cd00200">
    <property type="entry name" value="WD40"/>
    <property type="match status" value="1"/>
</dbReference>
<dbReference type="FunFam" id="2.130.10.10:FF:000133">
    <property type="entry name" value="Serine-threonine kinase receptor-associated protein"/>
    <property type="match status" value="1"/>
</dbReference>
<dbReference type="Gene3D" id="2.130.10.10">
    <property type="entry name" value="YVTN repeat-like/Quinoprotein amine dehydrogenase"/>
    <property type="match status" value="1"/>
</dbReference>
<dbReference type="InterPro" id="IPR020472">
    <property type="entry name" value="G-protein_beta_WD-40_rep"/>
</dbReference>
<dbReference type="InterPro" id="IPR015943">
    <property type="entry name" value="WD40/YVTN_repeat-like_dom_sf"/>
</dbReference>
<dbReference type="InterPro" id="IPR036322">
    <property type="entry name" value="WD40_repeat_dom_sf"/>
</dbReference>
<dbReference type="InterPro" id="IPR001680">
    <property type="entry name" value="WD40_rpt"/>
</dbReference>
<dbReference type="PANTHER" id="PTHR19877">
    <property type="entry name" value="EUKARYOTIC TRANSLATION INITIATION FACTOR 3 SUBUNIT I"/>
    <property type="match status" value="1"/>
</dbReference>
<dbReference type="PANTHER" id="PTHR19877:SF13">
    <property type="entry name" value="SERINE-THREONINE KINASE RECEPTOR-ASSOCIATED PROTEIN"/>
    <property type="match status" value="1"/>
</dbReference>
<dbReference type="Pfam" id="PF00400">
    <property type="entry name" value="WD40"/>
    <property type="match status" value="6"/>
</dbReference>
<dbReference type="PRINTS" id="PR00320">
    <property type="entry name" value="GPROTEINBRPT"/>
</dbReference>
<dbReference type="SMART" id="SM00320">
    <property type="entry name" value="WD40"/>
    <property type="match status" value="7"/>
</dbReference>
<dbReference type="SUPFAM" id="SSF50978">
    <property type="entry name" value="WD40 repeat-like"/>
    <property type="match status" value="1"/>
</dbReference>
<dbReference type="PROSITE" id="PS00678">
    <property type="entry name" value="WD_REPEATS_1"/>
    <property type="match status" value="1"/>
</dbReference>
<dbReference type="PROSITE" id="PS50082">
    <property type="entry name" value="WD_REPEATS_2"/>
    <property type="match status" value="4"/>
</dbReference>
<dbReference type="PROSITE" id="PS50294">
    <property type="entry name" value="WD_REPEATS_REGION"/>
    <property type="match status" value="1"/>
</dbReference>
<organism>
    <name type="scientific">Rattus norvegicus</name>
    <name type="common">Rat</name>
    <dbReference type="NCBI Taxonomy" id="10116"/>
    <lineage>
        <taxon>Eukaryota</taxon>
        <taxon>Metazoa</taxon>
        <taxon>Chordata</taxon>
        <taxon>Craniata</taxon>
        <taxon>Vertebrata</taxon>
        <taxon>Euteleostomi</taxon>
        <taxon>Mammalia</taxon>
        <taxon>Eutheria</taxon>
        <taxon>Euarchontoglires</taxon>
        <taxon>Glires</taxon>
        <taxon>Rodentia</taxon>
        <taxon>Myomorpha</taxon>
        <taxon>Muroidea</taxon>
        <taxon>Muridae</taxon>
        <taxon>Murinae</taxon>
        <taxon>Rattus</taxon>
    </lineage>
</organism>
<reference key="1">
    <citation type="journal article" date="2004" name="Genome Res.">
        <title>The status, quality, and expansion of the NIH full-length cDNA project: the Mammalian Gene Collection (MGC).</title>
        <authorList>
            <consortium name="The MGC Project Team"/>
        </authorList>
    </citation>
    <scope>NUCLEOTIDE SEQUENCE [LARGE SCALE MRNA]</scope>
    <source>
        <tissue>Heart</tissue>
    </source>
</reference>
<reference key="2">
    <citation type="submission" date="2007-04" db="UniProtKB">
        <authorList>
            <person name="Lubec G."/>
            <person name="Diao W."/>
        </authorList>
    </citation>
    <scope>PROTEIN SEQUENCE OF 273-290</scope>
    <scope>IDENTIFICATION BY MASS SPECTROMETRY</scope>
    <source>
        <strain>Sprague-Dawley</strain>
        <tissue>Hippocampus</tissue>
    </source>
</reference>
<reference key="3">
    <citation type="journal article" date="2012" name="Nat. Commun.">
        <title>Quantitative maps of protein phosphorylation sites across 14 different rat organs and tissues.</title>
        <authorList>
            <person name="Lundby A."/>
            <person name="Secher A."/>
            <person name="Lage K."/>
            <person name="Nordsborg N.B."/>
            <person name="Dmytriyev A."/>
            <person name="Lundby C."/>
            <person name="Olsen J.V."/>
        </authorList>
    </citation>
    <scope>PHOSPHORYLATION [LARGE SCALE ANALYSIS] AT SER-338</scope>
    <scope>IDENTIFICATION BY MASS SPECTROMETRY [LARGE SCALE ANALYSIS]</scope>
</reference>
<evidence type="ECO:0000250" key="1"/>
<evidence type="ECO:0000250" key="2">
    <source>
        <dbReference type="UniProtKB" id="Q9Y3F4"/>
    </source>
</evidence>
<evidence type="ECO:0000250" key="3">
    <source>
        <dbReference type="UniProtKB" id="Q9Z1Z2"/>
    </source>
</evidence>
<evidence type="ECO:0000256" key="4">
    <source>
        <dbReference type="SAM" id="MobiDB-lite"/>
    </source>
</evidence>
<evidence type="ECO:0000305" key="5"/>
<evidence type="ECO:0007744" key="6">
    <source>
    </source>
</evidence>
<comment type="function">
    <text evidence="2">The SMN complex catalyzes the assembly of small nuclear ribonucleoproteins (snRNPs), the building blocks of the spliceosome, and thereby plays an important role in the splicing of cellular pre-mRNAs. Most spliceosomal snRNPs contain a common set of Sm proteins SNRPB, SNRPD1, SNRPD2, SNRPD3, SNRPE, SNRPF and SNRPG that assemble in a heptameric protein ring on the Sm site of the small nuclear RNA to form the core snRNP (Sm core). In the cytosol, the Sm proteins SNRPD1, SNRPD2, SNRPE, SNRPF and SNRPG are trapped in an inactive 6S pICln-Sm complex by the chaperone CLNS1A that controls the assembly of the core snRNP. To assemble core snRNPs, the SMN complex accepts the trapped 5Sm proteins from CLNS1A forming an intermediate. Binding of snRNA inside 5Sm triggers eviction of the SMN complex, thereby allowing binding of SNRPD3 and SNRPB to complete assembly of the core snRNP. STRAP plays a role in the cellular distribution of the SMN complex. Negatively regulates TGF-beta signaling but positively regulates the PDPK1 kinase activity by enhancing its autophosphorylation and by significantly reducing the association of PDPK1 with 14-3-3 protein (By similarity).</text>
</comment>
<comment type="subunit">
    <text evidence="2">Part of the core SMN complex that contains SMN1, GEMIN2/SIP1, DDX20/GEMIN3, GEMIN4, GEMIN5, GEMIN6, GEMIN7, GEMIN8 and STRAP/UNRIP. Part of the SMN-Sm complex that contains SMN1, GEMIN2/SIP1, DDX20/GEMIN3, GEMIN4, GEMIN5, GEMIN6, GEMIN7, GEMIN8, STRAP/UNRIP and the Sm proteins SNRPB, SNRPD1, SNRPD2, SNRPD3, SNRPE, SNRPF and SNRPG. Interacts directly with GEMIN6 and GEMIN7. Associates with the SMN complex in the cytoplasm but not in the nucleus. Also interacts with CSDE1/UNR and MAWBP. Interacts with PDPK1. Interacts with TRIM48.</text>
</comment>
<comment type="subcellular location">
    <subcellularLocation>
        <location evidence="1">Cytoplasm</location>
    </subcellularLocation>
    <subcellularLocation>
        <location evidence="1">Nucleus</location>
    </subcellularLocation>
    <text evidence="1">Localized predominantly in the cytoplasm but also found in the nucleus.</text>
</comment>
<comment type="similarity">
    <text evidence="5">Belongs to the WD repeat STRAP family.</text>
</comment>
<protein>
    <recommendedName>
        <fullName>Serine-threonine kinase receptor-associated protein</fullName>
    </recommendedName>
    <alternativeName>
        <fullName>UNR-interacting protein</fullName>
    </alternativeName>
</protein>
<accession>Q5XIG8</accession>
<name>STRAP_RAT</name>
<keyword id="KW-0963">Cytoplasm</keyword>
<keyword id="KW-0903">Direct protein sequencing</keyword>
<keyword id="KW-0507">mRNA processing</keyword>
<keyword id="KW-0508">mRNA splicing</keyword>
<keyword id="KW-0539">Nucleus</keyword>
<keyword id="KW-0597">Phosphoprotein</keyword>
<keyword id="KW-1185">Reference proteome</keyword>
<keyword id="KW-0677">Repeat</keyword>
<keyword id="KW-0853">WD repeat</keyword>
<feature type="chain" id="PRO_0000288476" description="Serine-threonine kinase receptor-associated protein">
    <location>
        <begin position="1"/>
        <end position="350"/>
    </location>
</feature>
<feature type="repeat" description="WD 1">
    <location>
        <begin position="12"/>
        <end position="56"/>
    </location>
</feature>
<feature type="repeat" description="WD 2">
    <location>
        <begin position="57"/>
        <end position="96"/>
    </location>
</feature>
<feature type="repeat" description="WD 3">
    <location>
        <begin position="98"/>
        <end position="137"/>
    </location>
</feature>
<feature type="repeat" description="WD 4">
    <location>
        <begin position="141"/>
        <end position="179"/>
    </location>
</feature>
<feature type="repeat" description="WD 5">
    <location>
        <begin position="180"/>
        <end position="212"/>
    </location>
</feature>
<feature type="repeat" description="WD 6">
    <location>
        <begin position="221"/>
        <end position="262"/>
    </location>
</feature>
<feature type="repeat" description="WD 7">
    <location>
        <begin position="263"/>
        <end position="302"/>
    </location>
</feature>
<feature type="region of interest" description="Disordered" evidence="4">
    <location>
        <begin position="326"/>
        <end position="350"/>
    </location>
</feature>
<feature type="compositionally biased region" description="Polar residues" evidence="4">
    <location>
        <begin position="337"/>
        <end position="350"/>
    </location>
</feature>
<feature type="modified residue" description="Phosphoserine" evidence="2">
    <location>
        <position position="312"/>
    </location>
</feature>
<feature type="modified residue" description="Phosphoserine" evidence="2">
    <location>
        <position position="335"/>
    </location>
</feature>
<feature type="modified residue" description="Phosphoserine" evidence="6">
    <location>
        <position position="338"/>
    </location>
</feature>
<feature type="modified residue" description="Phosphotyrosine" evidence="3">
    <location>
        <position position="342"/>
    </location>
</feature>
<sequence>MAMRQTPLTCSGHTRPVVDLAFSGITPYGYFLISACKDGKPMLRQGDTGDWIGTFLGHKGAVWGATLNKDATKAATAAADFTAKVWDAVSGDELMTLAHKHIVKTVDFTQDSNYLLTGGQDKLLRIYDLNKPEAEPKEISGHTSGIKKALWCSEDKQILSADDKTVRLWDHATMTEVKSLNFNMSVSSMEYIPEGEILVITYGRSIAFHSAVSLEPIKSFEAPATINSASLHPEKEFLVAGGEDFKLYKYDYNSGEELESYKGHFGPIHCVRFSPDGELYASGSEDGTLRLWQTVVGKTYGLWKCVLPEEDSGELAKPKIGFPETAEEELEEIASENSDSIYSSTPEVKA</sequence>
<gene>
    <name type="primary">Strap</name>
    <name type="synonym">Unrip</name>
</gene>